<accession>O32614</accession>
<organism>
    <name type="scientific">Haemophilus ducreyi (strain 35000HP / ATCC 700724)</name>
    <dbReference type="NCBI Taxonomy" id="233412"/>
    <lineage>
        <taxon>Bacteria</taxon>
        <taxon>Pseudomonadati</taxon>
        <taxon>Pseudomonadota</taxon>
        <taxon>Gammaproteobacteria</taxon>
        <taxon>Pasteurellales</taxon>
        <taxon>Pasteurellaceae</taxon>
        <taxon>Haemophilus</taxon>
    </lineage>
</organism>
<evidence type="ECO:0000255" key="1">
    <source>
        <dbReference type="HAMAP-Rule" id="MF_01318"/>
    </source>
</evidence>
<evidence type="ECO:0000305" key="2"/>
<name>RL1_HAEDU</name>
<comment type="function">
    <text evidence="1">Binds directly to 23S rRNA. The L1 stalk is quite mobile in the ribosome, and is involved in E site tRNA release.</text>
</comment>
<comment type="function">
    <text evidence="1">Protein L1 is also a translational repressor protein, it controls the translation of the L11 operon by binding to its mRNA.</text>
</comment>
<comment type="subunit">
    <text evidence="1">Part of the 50S ribosomal subunit.</text>
</comment>
<comment type="similarity">
    <text evidence="1">Belongs to the universal ribosomal protein uL1 family.</text>
</comment>
<gene>
    <name evidence="1" type="primary">rplA</name>
    <name type="ordered locus">HD_1882</name>
</gene>
<keyword id="KW-1185">Reference proteome</keyword>
<keyword id="KW-0678">Repressor</keyword>
<keyword id="KW-0687">Ribonucleoprotein</keyword>
<keyword id="KW-0689">Ribosomal protein</keyword>
<keyword id="KW-0694">RNA-binding</keyword>
<keyword id="KW-0699">rRNA-binding</keyword>
<keyword id="KW-0810">Translation regulation</keyword>
<keyword id="KW-0820">tRNA-binding</keyword>
<feature type="chain" id="PRO_0000125664" description="Large ribosomal subunit protein uL1">
    <location>
        <begin position="1"/>
        <end position="229"/>
    </location>
</feature>
<feature type="sequence conflict" description="In Ref. 1; AAB63584." evidence="2" ref="1">
    <original>EQTSL</original>
    <variation>TNLTLILTLQGRIIGYNFDLNLREQADGA</variation>
    <location>
        <begin position="225"/>
        <end position="229"/>
    </location>
</feature>
<dbReference type="EMBL" id="AF009342">
    <property type="protein sequence ID" value="AAB63584.1"/>
    <property type="molecule type" value="Genomic_DNA"/>
</dbReference>
<dbReference type="EMBL" id="AE017143">
    <property type="protein sequence ID" value="AAP96612.1"/>
    <property type="molecule type" value="Genomic_DNA"/>
</dbReference>
<dbReference type="RefSeq" id="WP_010945641.1">
    <property type="nucleotide sequence ID" value="NC_002940.2"/>
</dbReference>
<dbReference type="SMR" id="O32614"/>
<dbReference type="STRING" id="233412.HD_1882"/>
<dbReference type="GeneID" id="60733463"/>
<dbReference type="KEGG" id="hdu:HD_1882"/>
<dbReference type="eggNOG" id="COG0081">
    <property type="taxonomic scope" value="Bacteria"/>
</dbReference>
<dbReference type="HOGENOM" id="CLU_062853_0_0_6"/>
<dbReference type="OrthoDB" id="9803740at2"/>
<dbReference type="Proteomes" id="UP000001022">
    <property type="component" value="Chromosome"/>
</dbReference>
<dbReference type="GO" id="GO:0022625">
    <property type="term" value="C:cytosolic large ribosomal subunit"/>
    <property type="evidence" value="ECO:0007669"/>
    <property type="project" value="TreeGrafter"/>
</dbReference>
<dbReference type="GO" id="GO:0019843">
    <property type="term" value="F:rRNA binding"/>
    <property type="evidence" value="ECO:0007669"/>
    <property type="project" value="UniProtKB-UniRule"/>
</dbReference>
<dbReference type="GO" id="GO:0003735">
    <property type="term" value="F:structural constituent of ribosome"/>
    <property type="evidence" value="ECO:0007669"/>
    <property type="project" value="InterPro"/>
</dbReference>
<dbReference type="GO" id="GO:0000049">
    <property type="term" value="F:tRNA binding"/>
    <property type="evidence" value="ECO:0007669"/>
    <property type="project" value="UniProtKB-KW"/>
</dbReference>
<dbReference type="GO" id="GO:0006417">
    <property type="term" value="P:regulation of translation"/>
    <property type="evidence" value="ECO:0007669"/>
    <property type="project" value="UniProtKB-KW"/>
</dbReference>
<dbReference type="GO" id="GO:0006412">
    <property type="term" value="P:translation"/>
    <property type="evidence" value="ECO:0007669"/>
    <property type="project" value="UniProtKB-UniRule"/>
</dbReference>
<dbReference type="CDD" id="cd00403">
    <property type="entry name" value="Ribosomal_L1"/>
    <property type="match status" value="1"/>
</dbReference>
<dbReference type="FunFam" id="3.40.50.790:FF:000001">
    <property type="entry name" value="50S ribosomal protein L1"/>
    <property type="match status" value="1"/>
</dbReference>
<dbReference type="Gene3D" id="3.30.190.20">
    <property type="match status" value="1"/>
</dbReference>
<dbReference type="Gene3D" id="3.40.50.790">
    <property type="match status" value="1"/>
</dbReference>
<dbReference type="HAMAP" id="MF_01318_B">
    <property type="entry name" value="Ribosomal_uL1_B"/>
    <property type="match status" value="1"/>
</dbReference>
<dbReference type="InterPro" id="IPR005878">
    <property type="entry name" value="Ribosom_uL1_bac-type"/>
</dbReference>
<dbReference type="InterPro" id="IPR002143">
    <property type="entry name" value="Ribosomal_uL1"/>
</dbReference>
<dbReference type="InterPro" id="IPR023674">
    <property type="entry name" value="Ribosomal_uL1-like"/>
</dbReference>
<dbReference type="InterPro" id="IPR028364">
    <property type="entry name" value="Ribosomal_uL1/biogenesis"/>
</dbReference>
<dbReference type="InterPro" id="IPR016095">
    <property type="entry name" value="Ribosomal_uL1_3-a/b-sand"/>
</dbReference>
<dbReference type="InterPro" id="IPR023673">
    <property type="entry name" value="Ribosomal_uL1_CS"/>
</dbReference>
<dbReference type="NCBIfam" id="TIGR01169">
    <property type="entry name" value="rplA_bact"/>
    <property type="match status" value="1"/>
</dbReference>
<dbReference type="PANTHER" id="PTHR36427">
    <property type="entry name" value="54S RIBOSOMAL PROTEIN L1, MITOCHONDRIAL"/>
    <property type="match status" value="1"/>
</dbReference>
<dbReference type="PANTHER" id="PTHR36427:SF3">
    <property type="entry name" value="LARGE RIBOSOMAL SUBUNIT PROTEIN UL1M"/>
    <property type="match status" value="1"/>
</dbReference>
<dbReference type="Pfam" id="PF00687">
    <property type="entry name" value="Ribosomal_L1"/>
    <property type="match status" value="1"/>
</dbReference>
<dbReference type="PIRSF" id="PIRSF002155">
    <property type="entry name" value="Ribosomal_L1"/>
    <property type="match status" value="1"/>
</dbReference>
<dbReference type="SUPFAM" id="SSF56808">
    <property type="entry name" value="Ribosomal protein L1"/>
    <property type="match status" value="1"/>
</dbReference>
<dbReference type="PROSITE" id="PS01199">
    <property type="entry name" value="RIBOSOMAL_L1"/>
    <property type="match status" value="1"/>
</dbReference>
<sequence>MAKLTKKMKAIKAGVDSTKAYEINEAIALLKQFATAKFVESVDVAVNLGIDPRKSDQNVRGATVLPHGTGRSARVAVFTQGANAEAAKAAGADLVGMEDLAEQIKKGEMNFDVVIASPDAMRVVGQLGQVLGPRGLMPNPKVGTVTLNVAEAVKNAKSGQIRYRNDKNGIIHTTIGKVDFSEVQLKENLQALLAALNKAKPTTAKGIFIKKVSVSTTMGAGVAVEQTSL</sequence>
<proteinExistence type="inferred from homology"/>
<protein>
    <recommendedName>
        <fullName evidence="1">Large ribosomal subunit protein uL1</fullName>
    </recommendedName>
    <alternativeName>
        <fullName evidence="2">50S ribosomal protein L1</fullName>
    </alternativeName>
</protein>
<reference key="1">
    <citation type="submission" date="1997-06" db="EMBL/GenBank/DDBJ databases">
        <title>Ribosomal proteins (L11 and L1) of Haemophilus ducreyi.</title>
        <authorList>
            <person name="Waring A.L."/>
            <person name="Parsons L.M."/>
        </authorList>
    </citation>
    <scope>NUCLEOTIDE SEQUENCE [GENOMIC DNA]</scope>
    <source>
        <strain>ATCC 33922 / 35000</strain>
    </source>
</reference>
<reference key="2">
    <citation type="submission" date="2003-06" db="EMBL/GenBank/DDBJ databases">
        <title>The complete genome sequence of Haemophilus ducreyi.</title>
        <authorList>
            <person name="Munson R.S. Jr."/>
            <person name="Ray W.C."/>
            <person name="Mahairas G."/>
            <person name="Sabo P."/>
            <person name="Mungur R."/>
            <person name="Johnson L."/>
            <person name="Nguyen D."/>
            <person name="Wang J."/>
            <person name="Forst C."/>
            <person name="Hood L."/>
        </authorList>
    </citation>
    <scope>NUCLEOTIDE SEQUENCE [LARGE SCALE GENOMIC DNA]</scope>
    <source>
        <strain>35000HP / ATCC 700724</strain>
    </source>
</reference>